<comment type="function">
    <text evidence="1">Catalyzes the reversible conversion of 3-phosphohydroxypyruvate to phosphoserine and of 3-hydroxy-2-oxo-4-phosphonooxybutanoate to phosphohydroxythreonine.</text>
</comment>
<comment type="catalytic activity">
    <reaction evidence="1">
        <text>O-phospho-L-serine + 2-oxoglutarate = 3-phosphooxypyruvate + L-glutamate</text>
        <dbReference type="Rhea" id="RHEA:14329"/>
        <dbReference type="ChEBI" id="CHEBI:16810"/>
        <dbReference type="ChEBI" id="CHEBI:18110"/>
        <dbReference type="ChEBI" id="CHEBI:29985"/>
        <dbReference type="ChEBI" id="CHEBI:57524"/>
        <dbReference type="EC" id="2.6.1.52"/>
    </reaction>
</comment>
<comment type="catalytic activity">
    <reaction evidence="1">
        <text>4-(phosphooxy)-L-threonine + 2-oxoglutarate = (R)-3-hydroxy-2-oxo-4-phosphooxybutanoate + L-glutamate</text>
        <dbReference type="Rhea" id="RHEA:16573"/>
        <dbReference type="ChEBI" id="CHEBI:16810"/>
        <dbReference type="ChEBI" id="CHEBI:29985"/>
        <dbReference type="ChEBI" id="CHEBI:58452"/>
        <dbReference type="ChEBI" id="CHEBI:58538"/>
        <dbReference type="EC" id="2.6.1.52"/>
    </reaction>
</comment>
<comment type="cofactor">
    <cofactor evidence="1">
        <name>pyridoxal 5'-phosphate</name>
        <dbReference type="ChEBI" id="CHEBI:597326"/>
    </cofactor>
    <text evidence="1">Binds 1 pyridoxal phosphate per subunit.</text>
</comment>
<comment type="pathway">
    <text evidence="1">Amino-acid biosynthesis; L-serine biosynthesis; L-serine from 3-phospho-D-glycerate: step 2/3.</text>
</comment>
<comment type="pathway">
    <text evidence="1">Cofactor biosynthesis; pyridoxine 5'-phosphate biosynthesis; pyridoxine 5'-phosphate from D-erythrose 4-phosphate: step 3/5.</text>
</comment>
<comment type="subunit">
    <text evidence="1">Homodimer.</text>
</comment>
<comment type="subcellular location">
    <subcellularLocation>
        <location evidence="1">Cytoplasm</location>
    </subcellularLocation>
</comment>
<comment type="similarity">
    <text evidence="1">Belongs to the class-V pyridoxal-phosphate-dependent aminotransferase family. SerC subfamily.</text>
</comment>
<protein>
    <recommendedName>
        <fullName evidence="1">Phosphoserine aminotransferase</fullName>
        <ecNumber evidence="1">2.6.1.52</ecNumber>
    </recommendedName>
    <alternativeName>
        <fullName evidence="1">Phosphohydroxythreonine aminotransferase</fullName>
        <shortName evidence="1">PSAT</shortName>
    </alternativeName>
</protein>
<dbReference type="EC" id="2.6.1.52" evidence="1"/>
<dbReference type="EMBL" id="CP001127">
    <property type="protein sequence ID" value="ACF89329.1"/>
    <property type="molecule type" value="Genomic_DNA"/>
</dbReference>
<dbReference type="RefSeq" id="WP_000079590.1">
    <property type="nucleotide sequence ID" value="NC_011094.1"/>
</dbReference>
<dbReference type="SMR" id="B4TRT8"/>
<dbReference type="KEGG" id="sew:SeSA_A1090"/>
<dbReference type="HOGENOM" id="CLU_034866_0_2_6"/>
<dbReference type="UniPathway" id="UPA00135">
    <property type="reaction ID" value="UER00197"/>
</dbReference>
<dbReference type="UniPathway" id="UPA00244">
    <property type="reaction ID" value="UER00311"/>
</dbReference>
<dbReference type="Proteomes" id="UP000001865">
    <property type="component" value="Chromosome"/>
</dbReference>
<dbReference type="GO" id="GO:0005737">
    <property type="term" value="C:cytoplasm"/>
    <property type="evidence" value="ECO:0007669"/>
    <property type="project" value="UniProtKB-SubCell"/>
</dbReference>
<dbReference type="GO" id="GO:0004648">
    <property type="term" value="F:O-phospho-L-serine:2-oxoglutarate aminotransferase activity"/>
    <property type="evidence" value="ECO:0007669"/>
    <property type="project" value="UniProtKB-UniRule"/>
</dbReference>
<dbReference type="GO" id="GO:0030170">
    <property type="term" value="F:pyridoxal phosphate binding"/>
    <property type="evidence" value="ECO:0007669"/>
    <property type="project" value="UniProtKB-UniRule"/>
</dbReference>
<dbReference type="GO" id="GO:0006564">
    <property type="term" value="P:L-serine biosynthetic process"/>
    <property type="evidence" value="ECO:0007669"/>
    <property type="project" value="UniProtKB-UniRule"/>
</dbReference>
<dbReference type="GO" id="GO:0008615">
    <property type="term" value="P:pyridoxine biosynthetic process"/>
    <property type="evidence" value="ECO:0007669"/>
    <property type="project" value="UniProtKB-UniRule"/>
</dbReference>
<dbReference type="CDD" id="cd00611">
    <property type="entry name" value="PSAT_like"/>
    <property type="match status" value="1"/>
</dbReference>
<dbReference type="FunFam" id="3.40.640.10:FF:000010">
    <property type="entry name" value="Phosphoserine aminotransferase"/>
    <property type="match status" value="1"/>
</dbReference>
<dbReference type="FunFam" id="3.90.1150.10:FF:000006">
    <property type="entry name" value="Phosphoserine aminotransferase"/>
    <property type="match status" value="1"/>
</dbReference>
<dbReference type="Gene3D" id="3.90.1150.10">
    <property type="entry name" value="Aspartate Aminotransferase, domain 1"/>
    <property type="match status" value="1"/>
</dbReference>
<dbReference type="Gene3D" id="3.40.640.10">
    <property type="entry name" value="Type I PLP-dependent aspartate aminotransferase-like (Major domain)"/>
    <property type="match status" value="1"/>
</dbReference>
<dbReference type="HAMAP" id="MF_00160">
    <property type="entry name" value="SerC_aminotrans_5"/>
    <property type="match status" value="1"/>
</dbReference>
<dbReference type="InterPro" id="IPR000192">
    <property type="entry name" value="Aminotrans_V_dom"/>
</dbReference>
<dbReference type="InterPro" id="IPR020578">
    <property type="entry name" value="Aminotrans_V_PyrdxlP_BS"/>
</dbReference>
<dbReference type="InterPro" id="IPR022278">
    <property type="entry name" value="Pser_aminoTfrase"/>
</dbReference>
<dbReference type="InterPro" id="IPR015424">
    <property type="entry name" value="PyrdxlP-dep_Trfase"/>
</dbReference>
<dbReference type="InterPro" id="IPR015421">
    <property type="entry name" value="PyrdxlP-dep_Trfase_major"/>
</dbReference>
<dbReference type="InterPro" id="IPR015422">
    <property type="entry name" value="PyrdxlP-dep_Trfase_small"/>
</dbReference>
<dbReference type="NCBIfam" id="NF003764">
    <property type="entry name" value="PRK05355.1"/>
    <property type="match status" value="1"/>
</dbReference>
<dbReference type="NCBIfam" id="TIGR01364">
    <property type="entry name" value="serC_1"/>
    <property type="match status" value="1"/>
</dbReference>
<dbReference type="PANTHER" id="PTHR43247">
    <property type="entry name" value="PHOSPHOSERINE AMINOTRANSFERASE"/>
    <property type="match status" value="1"/>
</dbReference>
<dbReference type="PANTHER" id="PTHR43247:SF1">
    <property type="entry name" value="PHOSPHOSERINE AMINOTRANSFERASE"/>
    <property type="match status" value="1"/>
</dbReference>
<dbReference type="Pfam" id="PF00266">
    <property type="entry name" value="Aminotran_5"/>
    <property type="match status" value="1"/>
</dbReference>
<dbReference type="PIRSF" id="PIRSF000525">
    <property type="entry name" value="SerC"/>
    <property type="match status" value="1"/>
</dbReference>
<dbReference type="SUPFAM" id="SSF53383">
    <property type="entry name" value="PLP-dependent transferases"/>
    <property type="match status" value="1"/>
</dbReference>
<dbReference type="PROSITE" id="PS00595">
    <property type="entry name" value="AA_TRANSFER_CLASS_5"/>
    <property type="match status" value="1"/>
</dbReference>
<sequence length="362" mass="39855">MAQVFNFSSGPAMLPAEVLKLAQQELRDWHGLGTSVMEISHRGKEFIQVAEEAEQDFRDLLNIPSNYKVLFCHGGGRGQFAGVPLNLLGDKTTADYVDAGYWAASAIKEAKKYCAPQIIDAKITVDGKRAVKPMREWQLSDNAAYLHYCPNETIDGIAIDETPDFGPEVVVTADFSSTILSAPLDVSRYGVIYAGAQKNIGPAGLTLVIVREDLLGKAHESCPSILDYTVLNDNDSMFNTPPTFAWYLSGLVFKWLKAQGGVAAMHKINQQKAELLYGVIDNSDFYRNDVAQANRSRMNVPFQLADNALDKVFLEESFAAGLHALKGHRVVGGMRASIYNAMPIEGVKALTDFMIDFERRHG</sequence>
<accession>B4TRT8</accession>
<keyword id="KW-0028">Amino-acid biosynthesis</keyword>
<keyword id="KW-0032">Aminotransferase</keyword>
<keyword id="KW-0963">Cytoplasm</keyword>
<keyword id="KW-0663">Pyridoxal phosphate</keyword>
<keyword id="KW-0664">Pyridoxine biosynthesis</keyword>
<keyword id="KW-0718">Serine biosynthesis</keyword>
<keyword id="KW-0808">Transferase</keyword>
<gene>
    <name evidence="1" type="primary">serC</name>
    <name type="ordered locus">SeSA_A1090</name>
</gene>
<name>SERC_SALSV</name>
<organism>
    <name type="scientific">Salmonella schwarzengrund (strain CVM19633)</name>
    <dbReference type="NCBI Taxonomy" id="439843"/>
    <lineage>
        <taxon>Bacteria</taxon>
        <taxon>Pseudomonadati</taxon>
        <taxon>Pseudomonadota</taxon>
        <taxon>Gammaproteobacteria</taxon>
        <taxon>Enterobacterales</taxon>
        <taxon>Enterobacteriaceae</taxon>
        <taxon>Salmonella</taxon>
    </lineage>
</organism>
<evidence type="ECO:0000255" key="1">
    <source>
        <dbReference type="HAMAP-Rule" id="MF_00160"/>
    </source>
</evidence>
<proteinExistence type="inferred from homology"/>
<feature type="chain" id="PRO_1000203559" description="Phosphoserine aminotransferase">
    <location>
        <begin position="1"/>
        <end position="362"/>
    </location>
</feature>
<feature type="binding site" evidence="1">
    <location>
        <position position="9"/>
    </location>
    <ligand>
        <name>L-glutamate</name>
        <dbReference type="ChEBI" id="CHEBI:29985"/>
    </ligand>
</feature>
<feature type="binding site" evidence="1">
    <location>
        <position position="42"/>
    </location>
    <ligand>
        <name>L-glutamate</name>
        <dbReference type="ChEBI" id="CHEBI:29985"/>
    </ligand>
</feature>
<feature type="binding site" evidence="1">
    <location>
        <begin position="76"/>
        <end position="77"/>
    </location>
    <ligand>
        <name>pyridoxal 5'-phosphate</name>
        <dbReference type="ChEBI" id="CHEBI:597326"/>
    </ligand>
</feature>
<feature type="binding site" evidence="1">
    <location>
        <position position="102"/>
    </location>
    <ligand>
        <name>pyridoxal 5'-phosphate</name>
        <dbReference type="ChEBI" id="CHEBI:597326"/>
    </ligand>
</feature>
<feature type="binding site" evidence="1">
    <location>
        <position position="153"/>
    </location>
    <ligand>
        <name>pyridoxal 5'-phosphate</name>
        <dbReference type="ChEBI" id="CHEBI:597326"/>
    </ligand>
</feature>
<feature type="binding site" evidence="1">
    <location>
        <position position="174"/>
    </location>
    <ligand>
        <name>pyridoxal 5'-phosphate</name>
        <dbReference type="ChEBI" id="CHEBI:597326"/>
    </ligand>
</feature>
<feature type="binding site" evidence="1">
    <location>
        <position position="197"/>
    </location>
    <ligand>
        <name>pyridoxal 5'-phosphate</name>
        <dbReference type="ChEBI" id="CHEBI:597326"/>
    </ligand>
</feature>
<feature type="binding site" evidence="1">
    <location>
        <begin position="239"/>
        <end position="240"/>
    </location>
    <ligand>
        <name>pyridoxal 5'-phosphate</name>
        <dbReference type="ChEBI" id="CHEBI:597326"/>
    </ligand>
</feature>
<feature type="modified residue" description="N6-(pyridoxal phosphate)lysine" evidence="1">
    <location>
        <position position="198"/>
    </location>
</feature>
<reference key="1">
    <citation type="journal article" date="2011" name="J. Bacteriol.">
        <title>Comparative genomics of 28 Salmonella enterica isolates: evidence for CRISPR-mediated adaptive sublineage evolution.</title>
        <authorList>
            <person name="Fricke W.F."/>
            <person name="Mammel M.K."/>
            <person name="McDermott P.F."/>
            <person name="Tartera C."/>
            <person name="White D.G."/>
            <person name="Leclerc J.E."/>
            <person name="Ravel J."/>
            <person name="Cebula T.A."/>
        </authorList>
    </citation>
    <scope>NUCLEOTIDE SEQUENCE [LARGE SCALE GENOMIC DNA]</scope>
    <source>
        <strain>CVM19633</strain>
    </source>
</reference>